<proteinExistence type="inferred from homology"/>
<reference key="1">
    <citation type="journal article" date="2003" name="Nat. Genet.">
        <title>Comparative analysis of the genome sequences of Bordetella pertussis, Bordetella parapertussis and Bordetella bronchiseptica.</title>
        <authorList>
            <person name="Parkhill J."/>
            <person name="Sebaihia M."/>
            <person name="Preston A."/>
            <person name="Murphy L.D."/>
            <person name="Thomson N.R."/>
            <person name="Harris D.E."/>
            <person name="Holden M.T.G."/>
            <person name="Churcher C.M."/>
            <person name="Bentley S.D."/>
            <person name="Mungall K.L."/>
            <person name="Cerdeno-Tarraga A.-M."/>
            <person name="Temple L."/>
            <person name="James K.D."/>
            <person name="Harris B."/>
            <person name="Quail M.A."/>
            <person name="Achtman M."/>
            <person name="Atkin R."/>
            <person name="Baker S."/>
            <person name="Basham D."/>
            <person name="Bason N."/>
            <person name="Cherevach I."/>
            <person name="Chillingworth T."/>
            <person name="Collins M."/>
            <person name="Cronin A."/>
            <person name="Davis P."/>
            <person name="Doggett J."/>
            <person name="Feltwell T."/>
            <person name="Goble A."/>
            <person name="Hamlin N."/>
            <person name="Hauser H."/>
            <person name="Holroyd S."/>
            <person name="Jagels K."/>
            <person name="Leather S."/>
            <person name="Moule S."/>
            <person name="Norberczak H."/>
            <person name="O'Neil S."/>
            <person name="Ormond D."/>
            <person name="Price C."/>
            <person name="Rabbinowitsch E."/>
            <person name="Rutter S."/>
            <person name="Sanders M."/>
            <person name="Saunders D."/>
            <person name="Seeger K."/>
            <person name="Sharp S."/>
            <person name="Simmonds M."/>
            <person name="Skelton J."/>
            <person name="Squares R."/>
            <person name="Squares S."/>
            <person name="Stevens K."/>
            <person name="Unwin L."/>
            <person name="Whitehead S."/>
            <person name="Barrell B.G."/>
            <person name="Maskell D.J."/>
        </authorList>
    </citation>
    <scope>NUCLEOTIDE SEQUENCE [LARGE SCALE GENOMIC DNA]</scope>
    <source>
        <strain>ATCC BAA-588 / NCTC 13252 / RB50</strain>
    </source>
</reference>
<sequence length="157" mass="17027">MATELSLSVQYGVADARLPRWRLRRWVQYALAGAAGDGHAGLAGAELGLRLVGLAEGRRLNREFRGRDYATNVLTFEYGTGPDGVARGDIVVCVPVLAREAREQRKTLLDHAAHLTVHGTLHALGYDHIKAGEARRMEALETAVLARMGIADPYLAA</sequence>
<evidence type="ECO:0000255" key="1">
    <source>
        <dbReference type="HAMAP-Rule" id="MF_00009"/>
    </source>
</evidence>
<dbReference type="EC" id="3.1.-.-" evidence="1"/>
<dbReference type="EMBL" id="BX640441">
    <property type="protein sequence ID" value="CAE31853.1"/>
    <property type="molecule type" value="Genomic_DNA"/>
</dbReference>
<dbReference type="RefSeq" id="WP_003809396.1">
    <property type="nucleotide sequence ID" value="NC_002927.3"/>
</dbReference>
<dbReference type="SMR" id="Q7WMN5"/>
<dbReference type="GeneID" id="69600965"/>
<dbReference type="KEGG" id="bbr:BB1355"/>
<dbReference type="eggNOG" id="COG0319">
    <property type="taxonomic scope" value="Bacteria"/>
</dbReference>
<dbReference type="HOGENOM" id="CLU_106710_0_1_4"/>
<dbReference type="Proteomes" id="UP000001027">
    <property type="component" value="Chromosome"/>
</dbReference>
<dbReference type="GO" id="GO:0005737">
    <property type="term" value="C:cytoplasm"/>
    <property type="evidence" value="ECO:0007669"/>
    <property type="project" value="UniProtKB-SubCell"/>
</dbReference>
<dbReference type="GO" id="GO:0004222">
    <property type="term" value="F:metalloendopeptidase activity"/>
    <property type="evidence" value="ECO:0007669"/>
    <property type="project" value="InterPro"/>
</dbReference>
<dbReference type="GO" id="GO:0004521">
    <property type="term" value="F:RNA endonuclease activity"/>
    <property type="evidence" value="ECO:0007669"/>
    <property type="project" value="UniProtKB-UniRule"/>
</dbReference>
<dbReference type="GO" id="GO:0008270">
    <property type="term" value="F:zinc ion binding"/>
    <property type="evidence" value="ECO:0007669"/>
    <property type="project" value="UniProtKB-UniRule"/>
</dbReference>
<dbReference type="GO" id="GO:0006364">
    <property type="term" value="P:rRNA processing"/>
    <property type="evidence" value="ECO:0007669"/>
    <property type="project" value="UniProtKB-UniRule"/>
</dbReference>
<dbReference type="Gene3D" id="3.40.390.30">
    <property type="entry name" value="Metalloproteases ('zincins'), catalytic domain"/>
    <property type="match status" value="1"/>
</dbReference>
<dbReference type="HAMAP" id="MF_00009">
    <property type="entry name" value="Endoribonucl_YbeY"/>
    <property type="match status" value="1"/>
</dbReference>
<dbReference type="InterPro" id="IPR023091">
    <property type="entry name" value="MetalPrtase_cat_dom_sf_prd"/>
</dbReference>
<dbReference type="InterPro" id="IPR002036">
    <property type="entry name" value="YbeY"/>
</dbReference>
<dbReference type="InterPro" id="IPR020549">
    <property type="entry name" value="YbeY_CS"/>
</dbReference>
<dbReference type="NCBIfam" id="TIGR00043">
    <property type="entry name" value="rRNA maturation RNase YbeY"/>
    <property type="match status" value="1"/>
</dbReference>
<dbReference type="PANTHER" id="PTHR46986">
    <property type="entry name" value="ENDORIBONUCLEASE YBEY, CHLOROPLASTIC"/>
    <property type="match status" value="1"/>
</dbReference>
<dbReference type="PANTHER" id="PTHR46986:SF1">
    <property type="entry name" value="ENDORIBONUCLEASE YBEY, CHLOROPLASTIC"/>
    <property type="match status" value="1"/>
</dbReference>
<dbReference type="Pfam" id="PF02130">
    <property type="entry name" value="YbeY"/>
    <property type="match status" value="1"/>
</dbReference>
<dbReference type="SUPFAM" id="SSF55486">
    <property type="entry name" value="Metalloproteases ('zincins'), catalytic domain"/>
    <property type="match status" value="1"/>
</dbReference>
<dbReference type="PROSITE" id="PS01306">
    <property type="entry name" value="UPF0054"/>
    <property type="match status" value="1"/>
</dbReference>
<organism>
    <name type="scientific">Bordetella bronchiseptica (strain ATCC BAA-588 / NCTC 13252 / RB50)</name>
    <name type="common">Alcaligenes bronchisepticus</name>
    <dbReference type="NCBI Taxonomy" id="257310"/>
    <lineage>
        <taxon>Bacteria</taxon>
        <taxon>Pseudomonadati</taxon>
        <taxon>Pseudomonadota</taxon>
        <taxon>Betaproteobacteria</taxon>
        <taxon>Burkholderiales</taxon>
        <taxon>Alcaligenaceae</taxon>
        <taxon>Bordetella</taxon>
    </lineage>
</organism>
<protein>
    <recommendedName>
        <fullName evidence="1">Endoribonuclease YbeY</fullName>
        <ecNumber evidence="1">3.1.-.-</ecNumber>
    </recommendedName>
</protein>
<name>YBEY_BORBR</name>
<keyword id="KW-0963">Cytoplasm</keyword>
<keyword id="KW-0255">Endonuclease</keyword>
<keyword id="KW-0378">Hydrolase</keyword>
<keyword id="KW-0479">Metal-binding</keyword>
<keyword id="KW-0540">Nuclease</keyword>
<keyword id="KW-0690">Ribosome biogenesis</keyword>
<keyword id="KW-0698">rRNA processing</keyword>
<keyword id="KW-0862">Zinc</keyword>
<feature type="chain" id="PRO_0000102417" description="Endoribonuclease YbeY">
    <location>
        <begin position="1"/>
        <end position="157"/>
    </location>
</feature>
<feature type="binding site" evidence="1">
    <location>
        <position position="118"/>
    </location>
    <ligand>
        <name>Zn(2+)</name>
        <dbReference type="ChEBI" id="CHEBI:29105"/>
        <note>catalytic</note>
    </ligand>
</feature>
<feature type="binding site" evidence="1">
    <location>
        <position position="122"/>
    </location>
    <ligand>
        <name>Zn(2+)</name>
        <dbReference type="ChEBI" id="CHEBI:29105"/>
        <note>catalytic</note>
    </ligand>
</feature>
<feature type="binding site" evidence="1">
    <location>
        <position position="128"/>
    </location>
    <ligand>
        <name>Zn(2+)</name>
        <dbReference type="ChEBI" id="CHEBI:29105"/>
        <note>catalytic</note>
    </ligand>
</feature>
<comment type="function">
    <text evidence="1">Single strand-specific metallo-endoribonuclease involved in late-stage 70S ribosome quality control and in maturation of the 3' terminus of the 16S rRNA.</text>
</comment>
<comment type="cofactor">
    <cofactor evidence="1">
        <name>Zn(2+)</name>
        <dbReference type="ChEBI" id="CHEBI:29105"/>
    </cofactor>
    <text evidence="1">Binds 1 zinc ion.</text>
</comment>
<comment type="subcellular location">
    <subcellularLocation>
        <location evidence="1">Cytoplasm</location>
    </subcellularLocation>
</comment>
<comment type="similarity">
    <text evidence="1">Belongs to the endoribonuclease YbeY family.</text>
</comment>
<accession>Q7WMN5</accession>
<gene>
    <name evidence="1" type="primary">ybeY</name>
    <name type="ordered locus">BB1355</name>
</gene>